<protein>
    <recommendedName>
        <fullName evidence="1">Cell division protein ZapB</fullName>
    </recommendedName>
</protein>
<dbReference type="EMBL" id="AE016827">
    <property type="protein sequence ID" value="AAU38860.1"/>
    <property type="molecule type" value="Genomic_DNA"/>
</dbReference>
<dbReference type="RefSeq" id="WP_011201404.1">
    <property type="nucleotide sequence ID" value="NC_006300.1"/>
</dbReference>
<dbReference type="SMR" id="Q65QA0"/>
<dbReference type="STRING" id="221988.MS2253"/>
<dbReference type="KEGG" id="msu:MS2253"/>
<dbReference type="eggNOG" id="COG3074">
    <property type="taxonomic scope" value="Bacteria"/>
</dbReference>
<dbReference type="HOGENOM" id="CLU_171174_2_0_6"/>
<dbReference type="OrthoDB" id="6554593at2"/>
<dbReference type="Proteomes" id="UP000000607">
    <property type="component" value="Chromosome"/>
</dbReference>
<dbReference type="GO" id="GO:0005737">
    <property type="term" value="C:cytoplasm"/>
    <property type="evidence" value="ECO:0007669"/>
    <property type="project" value="UniProtKB-SubCell"/>
</dbReference>
<dbReference type="GO" id="GO:0000917">
    <property type="term" value="P:division septum assembly"/>
    <property type="evidence" value="ECO:0007669"/>
    <property type="project" value="UniProtKB-KW"/>
</dbReference>
<dbReference type="GO" id="GO:0043093">
    <property type="term" value="P:FtsZ-dependent cytokinesis"/>
    <property type="evidence" value="ECO:0007669"/>
    <property type="project" value="UniProtKB-UniRule"/>
</dbReference>
<dbReference type="Gene3D" id="1.20.5.340">
    <property type="match status" value="1"/>
</dbReference>
<dbReference type="HAMAP" id="MF_01196">
    <property type="entry name" value="ZapB"/>
    <property type="match status" value="1"/>
</dbReference>
<dbReference type="InterPro" id="IPR009252">
    <property type="entry name" value="Cell_div_ZapB"/>
</dbReference>
<dbReference type="Pfam" id="PF06005">
    <property type="entry name" value="ZapB"/>
    <property type="match status" value="1"/>
</dbReference>
<keyword id="KW-0131">Cell cycle</keyword>
<keyword id="KW-0132">Cell division</keyword>
<keyword id="KW-0175">Coiled coil</keyword>
<keyword id="KW-0963">Cytoplasm</keyword>
<keyword id="KW-0717">Septation</keyword>
<organism>
    <name type="scientific">Mannheimia succiniciproducens (strain KCTC 0769BP / MBEL55E)</name>
    <dbReference type="NCBI Taxonomy" id="221988"/>
    <lineage>
        <taxon>Bacteria</taxon>
        <taxon>Pseudomonadati</taxon>
        <taxon>Pseudomonadota</taxon>
        <taxon>Gammaproteobacteria</taxon>
        <taxon>Pasteurellales</taxon>
        <taxon>Pasteurellaceae</taxon>
        <taxon>Basfia</taxon>
    </lineage>
</organism>
<gene>
    <name evidence="1" type="primary">zapB</name>
    <name type="ordered locus">MS2253</name>
</gene>
<evidence type="ECO:0000255" key="1">
    <source>
        <dbReference type="HAMAP-Rule" id="MF_01196"/>
    </source>
</evidence>
<evidence type="ECO:0000256" key="2">
    <source>
        <dbReference type="SAM" id="MobiDB-lite"/>
    </source>
</evidence>
<sequence length="72" mass="8425">MSLEILDQLEGKIKQAVETIQLLQLEVEELKEKNQQAQQANDELRSENEQLKGEHNNWQERLRSLLGQIDNV</sequence>
<comment type="function">
    <text evidence="1">Non-essential, abundant cell division factor that is required for proper Z-ring formation. It is recruited early to the divisome by direct interaction with FtsZ, stimulating Z-ring assembly and thereby promoting cell division earlier in the cell cycle. Its recruitment to the Z-ring requires functional FtsA or ZipA.</text>
</comment>
<comment type="subunit">
    <text evidence="1">Homodimer. The ends of the coiled-coil dimer bind to each other, forming polymers. Interacts with FtsZ.</text>
</comment>
<comment type="subcellular location">
    <subcellularLocation>
        <location>Cytoplasm</location>
    </subcellularLocation>
    <text evidence="1">Localizes to the septum at mid-cell, in a FtsZ-like pattern.</text>
</comment>
<comment type="similarity">
    <text evidence="1">Belongs to the ZapB family.</text>
</comment>
<name>ZAPB_MANSM</name>
<proteinExistence type="inferred from homology"/>
<reference key="1">
    <citation type="journal article" date="2004" name="Nat. Biotechnol.">
        <title>The genome sequence of the capnophilic rumen bacterium Mannheimia succiniciproducens.</title>
        <authorList>
            <person name="Hong S.H."/>
            <person name="Kim J.S."/>
            <person name="Lee S.Y."/>
            <person name="In Y.H."/>
            <person name="Choi S.S."/>
            <person name="Rih J.-K."/>
            <person name="Kim C.H."/>
            <person name="Jeong H."/>
            <person name="Hur C.G."/>
            <person name="Kim J.J."/>
        </authorList>
    </citation>
    <scope>NUCLEOTIDE SEQUENCE [LARGE SCALE GENOMIC DNA]</scope>
    <source>
        <strain>KCTC 0769BP / MBEL55E</strain>
    </source>
</reference>
<accession>Q65QA0</accession>
<feature type="chain" id="PRO_0000333909" description="Cell division protein ZapB">
    <location>
        <begin position="1"/>
        <end position="72"/>
    </location>
</feature>
<feature type="region of interest" description="Disordered" evidence="2">
    <location>
        <begin position="34"/>
        <end position="57"/>
    </location>
</feature>
<feature type="coiled-coil region" evidence="1">
    <location>
        <begin position="2"/>
        <end position="72"/>
    </location>
</feature>
<feature type="compositionally biased region" description="Basic and acidic residues" evidence="2">
    <location>
        <begin position="42"/>
        <end position="57"/>
    </location>
</feature>